<feature type="chain" id="PRO_1000145728" description="Cation/acetate symporter ActP">
    <location>
        <begin position="1"/>
        <end position="549"/>
    </location>
</feature>
<feature type="transmembrane region" description="Helical" evidence="1">
    <location>
        <begin position="33"/>
        <end position="53"/>
    </location>
</feature>
<feature type="transmembrane region" description="Helical" evidence="1">
    <location>
        <begin position="77"/>
        <end position="97"/>
    </location>
</feature>
<feature type="transmembrane region" description="Helical" evidence="1">
    <location>
        <begin position="103"/>
        <end position="123"/>
    </location>
</feature>
<feature type="transmembrane region" description="Helical" evidence="1">
    <location>
        <begin position="148"/>
        <end position="168"/>
    </location>
</feature>
<feature type="transmembrane region" description="Helical" evidence="1">
    <location>
        <begin position="183"/>
        <end position="203"/>
    </location>
</feature>
<feature type="transmembrane region" description="Helical" evidence="1">
    <location>
        <begin position="206"/>
        <end position="226"/>
    </location>
</feature>
<feature type="transmembrane region" description="Helical" evidence="1">
    <location>
        <begin position="262"/>
        <end position="282"/>
    </location>
</feature>
<feature type="transmembrane region" description="Helical" evidence="1">
    <location>
        <begin position="303"/>
        <end position="323"/>
    </location>
</feature>
<feature type="transmembrane region" description="Helical" evidence="1">
    <location>
        <begin position="355"/>
        <end position="375"/>
    </location>
</feature>
<feature type="transmembrane region" description="Helical" evidence="1">
    <location>
        <begin position="404"/>
        <end position="424"/>
    </location>
</feature>
<feature type="transmembrane region" description="Helical" evidence="1">
    <location>
        <begin position="428"/>
        <end position="448"/>
    </location>
</feature>
<feature type="transmembrane region" description="Helical" evidence="1">
    <location>
        <begin position="464"/>
        <end position="484"/>
    </location>
</feature>
<feature type="transmembrane region" description="Helical" evidence="1">
    <location>
        <begin position="493"/>
        <end position="513"/>
    </location>
</feature>
<name>ACTP_SALPK</name>
<dbReference type="EMBL" id="FM200053">
    <property type="protein sequence ID" value="CAR62082.1"/>
    <property type="molecule type" value="Genomic_DNA"/>
</dbReference>
<dbReference type="RefSeq" id="WP_000832536.1">
    <property type="nucleotide sequence ID" value="NC_011147.1"/>
</dbReference>
<dbReference type="SMR" id="B5BJZ5"/>
<dbReference type="KEGG" id="sek:SSPA3798"/>
<dbReference type="HOGENOM" id="CLU_018808_8_3_6"/>
<dbReference type="Proteomes" id="UP000001869">
    <property type="component" value="Chromosome"/>
</dbReference>
<dbReference type="GO" id="GO:0005886">
    <property type="term" value="C:plasma membrane"/>
    <property type="evidence" value="ECO:0007669"/>
    <property type="project" value="UniProtKB-SubCell"/>
</dbReference>
<dbReference type="GO" id="GO:0015123">
    <property type="term" value="F:acetate transmembrane transporter activity"/>
    <property type="evidence" value="ECO:0007669"/>
    <property type="project" value="UniProtKB-UniRule"/>
</dbReference>
<dbReference type="GO" id="GO:0043879">
    <property type="term" value="F:glycolate transmembrane transporter activity"/>
    <property type="evidence" value="ECO:0007669"/>
    <property type="project" value="InterPro"/>
</dbReference>
<dbReference type="GO" id="GO:0015293">
    <property type="term" value="F:symporter activity"/>
    <property type="evidence" value="ECO:0007669"/>
    <property type="project" value="UniProtKB-KW"/>
</dbReference>
<dbReference type="GO" id="GO:0006847">
    <property type="term" value="P:plasma membrane acetate transport"/>
    <property type="evidence" value="ECO:0007669"/>
    <property type="project" value="TreeGrafter"/>
</dbReference>
<dbReference type="GO" id="GO:0006814">
    <property type="term" value="P:sodium ion transport"/>
    <property type="evidence" value="ECO:0007669"/>
    <property type="project" value="UniProtKB-KW"/>
</dbReference>
<dbReference type="CDD" id="cd11480">
    <property type="entry name" value="SLC5sbd_u4"/>
    <property type="match status" value="1"/>
</dbReference>
<dbReference type="FunFam" id="1.20.1730.10:FF:000001">
    <property type="entry name" value="Cation/acetate symporter ActP"/>
    <property type="match status" value="1"/>
</dbReference>
<dbReference type="Gene3D" id="1.20.1730.10">
    <property type="entry name" value="Sodium/glucose cotransporter"/>
    <property type="match status" value="1"/>
</dbReference>
<dbReference type="HAMAP" id="MF_01426">
    <property type="entry name" value="Acet_symport_ActP"/>
    <property type="match status" value="1"/>
</dbReference>
<dbReference type="InterPro" id="IPR014083">
    <property type="entry name" value="Cation/Ac_symporter_ActP"/>
</dbReference>
<dbReference type="InterPro" id="IPR038377">
    <property type="entry name" value="Na/Glc_symporter_sf"/>
</dbReference>
<dbReference type="InterPro" id="IPR001734">
    <property type="entry name" value="Na/solute_symporter"/>
</dbReference>
<dbReference type="InterPro" id="IPR018212">
    <property type="entry name" value="Na/solute_symporter_CS"/>
</dbReference>
<dbReference type="InterPro" id="IPR050277">
    <property type="entry name" value="Sodium:Solute_Symporter"/>
</dbReference>
<dbReference type="NCBIfam" id="NF006903">
    <property type="entry name" value="PRK09395.1"/>
    <property type="match status" value="1"/>
</dbReference>
<dbReference type="NCBIfam" id="NF009135">
    <property type="entry name" value="PRK12488.1"/>
    <property type="match status" value="1"/>
</dbReference>
<dbReference type="NCBIfam" id="TIGR00813">
    <property type="entry name" value="sss"/>
    <property type="match status" value="1"/>
</dbReference>
<dbReference type="NCBIfam" id="TIGR02711">
    <property type="entry name" value="symport_actP"/>
    <property type="match status" value="1"/>
</dbReference>
<dbReference type="PANTHER" id="PTHR48086:SF6">
    <property type="entry name" value="CATION_ACETATE SYMPORTER ACTP"/>
    <property type="match status" value="1"/>
</dbReference>
<dbReference type="PANTHER" id="PTHR48086">
    <property type="entry name" value="SODIUM/PROLINE SYMPORTER-RELATED"/>
    <property type="match status" value="1"/>
</dbReference>
<dbReference type="Pfam" id="PF00474">
    <property type="entry name" value="SSF"/>
    <property type="match status" value="1"/>
</dbReference>
<dbReference type="PROSITE" id="PS00456">
    <property type="entry name" value="NA_SOLUT_SYMP_1"/>
    <property type="match status" value="1"/>
</dbReference>
<dbReference type="PROSITE" id="PS00457">
    <property type="entry name" value="NA_SOLUT_SYMP_2"/>
    <property type="match status" value="1"/>
</dbReference>
<dbReference type="PROSITE" id="PS50283">
    <property type="entry name" value="NA_SOLUT_SYMP_3"/>
    <property type="match status" value="1"/>
</dbReference>
<gene>
    <name evidence="1" type="primary">actP</name>
    <name type="ordered locus">SSPA3798</name>
</gene>
<sequence>MKRVLTALAAALPFAAHAADAISGAVERQPTNWQAIIMFLIFVVFTLGITYWASKRVRSRSDYYTAGGNITGFQNGLAIAGDYMSAASFLGISALVFTSGYDGLIYSLGFLVGWPIILFLIAERLRNLGRYTFADVASYRLKQGPIRILSACGSLVVVALYLIAQMVGAGKLIELLFGLNYHIAVVLVGVLMMMYVLFGGMLATTWVQIIKAVLLLFGASFMAFMVMKHVGFSFNNLFTEAMAVHPKGTAIMSPGGLVQDPISALSLGLGLMFGTAGLPHILMRFFTVSDAREARKSVFYATGFMGYFYILTFIIGFGAIMLVGANPAYKDAAGALIGGNNMAAVHLANAVGGNLFLGFISAVAFATILAVVAGLTLAGASAVSHDLYANVFRKGATEREELKVSKITVLVLGVIAIILGVLFENQNIAFMVGLAFAIAASCNFPIILLSMYWSKLTTRGAMLGGWLGLLTAVVLMILGPTIWVQILGHEKAIFPYEYPALFSISVAFLGIWFFSATDNSAEGNREREQFRAQFIRSQTGFGVQQGRAH</sequence>
<accession>B5BJZ5</accession>
<protein>
    <recommendedName>
        <fullName evidence="1">Cation/acetate symporter ActP</fullName>
    </recommendedName>
    <alternativeName>
        <fullName evidence="1">Acetate permease</fullName>
    </alternativeName>
    <alternativeName>
        <fullName evidence="1">Acetate transporter ActP</fullName>
    </alternativeName>
</protein>
<proteinExistence type="inferred from homology"/>
<evidence type="ECO:0000255" key="1">
    <source>
        <dbReference type="HAMAP-Rule" id="MF_01426"/>
    </source>
</evidence>
<reference key="1">
    <citation type="journal article" date="2009" name="BMC Genomics">
        <title>Pseudogene accumulation in the evolutionary histories of Salmonella enterica serovars Paratyphi A and Typhi.</title>
        <authorList>
            <person name="Holt K.E."/>
            <person name="Thomson N.R."/>
            <person name="Wain J."/>
            <person name="Langridge G.C."/>
            <person name="Hasan R."/>
            <person name="Bhutta Z.A."/>
            <person name="Quail M.A."/>
            <person name="Norbertczak H."/>
            <person name="Walker D."/>
            <person name="Simmonds M."/>
            <person name="White B."/>
            <person name="Bason N."/>
            <person name="Mungall K."/>
            <person name="Dougan G."/>
            <person name="Parkhill J."/>
        </authorList>
    </citation>
    <scope>NUCLEOTIDE SEQUENCE [LARGE SCALE GENOMIC DNA]</scope>
    <source>
        <strain>AKU_12601</strain>
    </source>
</reference>
<keyword id="KW-0997">Cell inner membrane</keyword>
<keyword id="KW-1003">Cell membrane</keyword>
<keyword id="KW-0406">Ion transport</keyword>
<keyword id="KW-0472">Membrane</keyword>
<keyword id="KW-0915">Sodium</keyword>
<keyword id="KW-0739">Sodium transport</keyword>
<keyword id="KW-0769">Symport</keyword>
<keyword id="KW-0812">Transmembrane</keyword>
<keyword id="KW-1133">Transmembrane helix</keyword>
<keyword id="KW-0813">Transport</keyword>
<organism>
    <name type="scientific">Salmonella paratyphi A (strain AKU_12601)</name>
    <dbReference type="NCBI Taxonomy" id="554290"/>
    <lineage>
        <taxon>Bacteria</taxon>
        <taxon>Pseudomonadati</taxon>
        <taxon>Pseudomonadota</taxon>
        <taxon>Gammaproteobacteria</taxon>
        <taxon>Enterobacterales</taxon>
        <taxon>Enterobacteriaceae</taxon>
        <taxon>Salmonella</taxon>
    </lineage>
</organism>
<comment type="function">
    <text evidence="1">Transports acetate.</text>
</comment>
<comment type="subcellular location">
    <subcellularLocation>
        <location evidence="1">Cell inner membrane</location>
        <topology evidence="1">Multi-pass membrane protein</topology>
    </subcellularLocation>
</comment>
<comment type="similarity">
    <text evidence="1">Belongs to the sodium:solute symporter (SSF) (TC 2.A.21) family.</text>
</comment>